<comment type="function">
    <text evidence="1">Part of the ABC transporter complex BtuCDF involved in vitamin B12 import. Binds vitamin B12 and delivers it to the periplasmic surface of BtuC.</text>
</comment>
<comment type="subunit">
    <text evidence="1">The complex is composed of two ATP-binding proteins (BtuD), two transmembrane proteins (BtuC) and a solute-binding protein (BtuF).</text>
</comment>
<comment type="subcellular location">
    <subcellularLocation>
        <location evidence="1">Periplasm</location>
    </subcellularLocation>
</comment>
<comment type="similarity">
    <text evidence="1">Belongs to the BtuF family.</text>
</comment>
<protein>
    <recommendedName>
        <fullName evidence="1">Vitamin B12-binding protein</fullName>
    </recommendedName>
</protein>
<dbReference type="EMBL" id="CP000627">
    <property type="protein sequence ID" value="ABQ22132.1"/>
    <property type="molecule type" value="Genomic_DNA"/>
</dbReference>
<dbReference type="EMBL" id="CP001235">
    <property type="protein sequence ID" value="ACP10486.1"/>
    <property type="molecule type" value="Genomic_DNA"/>
</dbReference>
<dbReference type="RefSeq" id="WP_000960255.1">
    <property type="nucleotide sequence ID" value="NZ_JAACZH010000008.1"/>
</dbReference>
<dbReference type="PDB" id="5YSC">
    <property type="method" value="X-ray"/>
    <property type="resolution" value="1.67 A"/>
    <property type="chains" value="A=21-276"/>
</dbReference>
<dbReference type="PDBsum" id="5YSC"/>
<dbReference type="SMR" id="A5F5P5"/>
<dbReference type="KEGG" id="vco:VC0395_A1959"/>
<dbReference type="KEGG" id="vcr:VC395_2496"/>
<dbReference type="PATRIC" id="fig|345073.21.peg.2400"/>
<dbReference type="eggNOG" id="COG0614">
    <property type="taxonomic scope" value="Bacteria"/>
</dbReference>
<dbReference type="HOGENOM" id="CLU_038034_2_5_6"/>
<dbReference type="OrthoDB" id="6495095at2"/>
<dbReference type="BRENDA" id="7.6.2.8">
    <property type="organism ID" value="15862"/>
</dbReference>
<dbReference type="Proteomes" id="UP000000249">
    <property type="component" value="Chromosome 2"/>
</dbReference>
<dbReference type="GO" id="GO:0042597">
    <property type="term" value="C:periplasmic space"/>
    <property type="evidence" value="ECO:0007669"/>
    <property type="project" value="UniProtKB-SubCell"/>
</dbReference>
<dbReference type="GO" id="GO:0031419">
    <property type="term" value="F:cobalamin binding"/>
    <property type="evidence" value="ECO:0007669"/>
    <property type="project" value="InterPro"/>
</dbReference>
<dbReference type="GO" id="GO:0015889">
    <property type="term" value="P:cobalamin transport"/>
    <property type="evidence" value="ECO:0007669"/>
    <property type="project" value="UniProtKB-UniRule"/>
</dbReference>
<dbReference type="CDD" id="cd01144">
    <property type="entry name" value="BtuF"/>
    <property type="match status" value="1"/>
</dbReference>
<dbReference type="Gene3D" id="3.40.50.1980">
    <property type="entry name" value="Nitrogenase molybdenum iron protein domain"/>
    <property type="match status" value="2"/>
</dbReference>
<dbReference type="HAMAP" id="MF_01000">
    <property type="entry name" value="BtuF"/>
    <property type="match status" value="1"/>
</dbReference>
<dbReference type="InterPro" id="IPR002491">
    <property type="entry name" value="ABC_transptr_periplasmic_BD"/>
</dbReference>
<dbReference type="InterPro" id="IPR023544">
    <property type="entry name" value="ABC_transptr_vit_B12-bd"/>
</dbReference>
<dbReference type="InterPro" id="IPR054828">
    <property type="entry name" value="Vit_B12_bind_prot"/>
</dbReference>
<dbReference type="InterPro" id="IPR051030">
    <property type="entry name" value="Vitamin_B12-ABC_binding"/>
</dbReference>
<dbReference type="NCBIfam" id="NF002894">
    <property type="entry name" value="PRK03379.1"/>
    <property type="match status" value="1"/>
</dbReference>
<dbReference type="NCBIfam" id="NF038402">
    <property type="entry name" value="TroA_like"/>
    <property type="match status" value="1"/>
</dbReference>
<dbReference type="PANTHER" id="PTHR42860">
    <property type="entry name" value="VITAMIN B12-BINDING PROTEIN"/>
    <property type="match status" value="1"/>
</dbReference>
<dbReference type="PANTHER" id="PTHR42860:SF1">
    <property type="entry name" value="VITAMIN B12-BINDING PROTEIN"/>
    <property type="match status" value="1"/>
</dbReference>
<dbReference type="Pfam" id="PF01497">
    <property type="entry name" value="Peripla_BP_2"/>
    <property type="match status" value="1"/>
</dbReference>
<dbReference type="SUPFAM" id="SSF53807">
    <property type="entry name" value="Helical backbone' metal receptor"/>
    <property type="match status" value="1"/>
</dbReference>
<dbReference type="PROSITE" id="PS50983">
    <property type="entry name" value="FE_B12_PBP"/>
    <property type="match status" value="1"/>
</dbReference>
<reference key="1">
    <citation type="submission" date="2007-03" db="EMBL/GenBank/DDBJ databases">
        <authorList>
            <person name="Heidelberg J."/>
        </authorList>
    </citation>
    <scope>NUCLEOTIDE SEQUENCE [LARGE SCALE GENOMIC DNA]</scope>
    <source>
        <strain>ATCC 39541 / Classical Ogawa 395 / O395</strain>
    </source>
</reference>
<reference key="2">
    <citation type="journal article" date="2008" name="PLoS ONE">
        <title>A recalibrated molecular clock and independent origins for the cholera pandemic clones.</title>
        <authorList>
            <person name="Feng L."/>
            <person name="Reeves P.R."/>
            <person name="Lan R."/>
            <person name="Ren Y."/>
            <person name="Gao C."/>
            <person name="Zhou Z."/>
            <person name="Ren Y."/>
            <person name="Cheng J."/>
            <person name="Wang W."/>
            <person name="Wang J."/>
            <person name="Qian W."/>
            <person name="Li D."/>
            <person name="Wang L."/>
        </authorList>
    </citation>
    <scope>NUCLEOTIDE SEQUENCE [LARGE SCALE GENOMIC DNA]</scope>
    <source>
        <strain>ATCC 39541 / Classical Ogawa 395 / O395</strain>
    </source>
</reference>
<feature type="signal peptide" evidence="1">
    <location>
        <begin position="1"/>
        <end position="20"/>
    </location>
</feature>
<feature type="chain" id="PRO_1000072889" description="Vitamin B12-binding protein">
    <location>
        <begin position="21"/>
        <end position="276"/>
    </location>
</feature>
<feature type="domain" description="Fe/B12 periplasmic-binding" evidence="1">
    <location>
        <begin position="27"/>
        <end position="274"/>
    </location>
</feature>
<feature type="binding site" evidence="1">
    <location>
        <position position="54"/>
    </location>
    <ligand>
        <name>cyanocob(III)alamin</name>
        <dbReference type="ChEBI" id="CHEBI:17439"/>
    </ligand>
</feature>
<feature type="site" description="Important for BtuC binding" evidence="1">
    <location>
        <position position="76"/>
    </location>
</feature>
<feature type="site" description="Important for BtuC binding" evidence="1">
    <location>
        <position position="206"/>
    </location>
</feature>
<feature type="disulfide bond" evidence="1">
    <location>
        <begin position="187"/>
        <end position="267"/>
    </location>
</feature>
<feature type="strand" evidence="2">
    <location>
        <begin position="26"/>
        <end position="30"/>
    </location>
</feature>
<feature type="helix" evidence="2">
    <location>
        <begin position="33"/>
        <end position="41"/>
    </location>
</feature>
<feature type="helix" evidence="2">
    <location>
        <begin position="45"/>
        <end position="47"/>
    </location>
</feature>
<feature type="strand" evidence="2">
    <location>
        <begin position="48"/>
        <end position="51"/>
    </location>
</feature>
<feature type="helix" evidence="2">
    <location>
        <begin position="59"/>
        <end position="63"/>
    </location>
</feature>
<feature type="helix" evidence="2">
    <location>
        <begin position="75"/>
        <end position="81"/>
    </location>
</feature>
<feature type="strand" evidence="2">
    <location>
        <begin position="84"/>
        <end position="88"/>
    </location>
</feature>
<feature type="turn" evidence="2">
    <location>
        <begin position="90"/>
        <end position="92"/>
    </location>
</feature>
<feature type="helix" evidence="2">
    <location>
        <begin position="95"/>
        <end position="103"/>
    </location>
</feature>
<feature type="strand" evidence="2">
    <location>
        <begin position="108"/>
        <end position="110"/>
    </location>
</feature>
<feature type="strand" evidence="2">
    <location>
        <begin position="114"/>
        <end position="116"/>
    </location>
</feature>
<feature type="helix" evidence="2">
    <location>
        <begin position="117"/>
        <end position="127"/>
    </location>
</feature>
<feature type="helix" evidence="2">
    <location>
        <begin position="133"/>
        <end position="153"/>
    </location>
</feature>
<feature type="strand" evidence="2">
    <location>
        <begin position="160"/>
        <end position="164"/>
    </location>
</feature>
<feature type="strand" evidence="2">
    <location>
        <begin position="168"/>
        <end position="172"/>
    </location>
</feature>
<feature type="helix" evidence="2">
    <location>
        <begin position="181"/>
        <end position="186"/>
    </location>
</feature>
<feature type="strand" evidence="2">
    <location>
        <begin position="189"/>
        <end position="191"/>
    </location>
</feature>
<feature type="strand" evidence="2">
    <location>
        <begin position="197"/>
        <end position="200"/>
    </location>
</feature>
<feature type="helix" evidence="2">
    <location>
        <begin position="205"/>
        <end position="211"/>
    </location>
</feature>
<feature type="strand" evidence="2">
    <location>
        <begin position="214"/>
        <end position="218"/>
    </location>
</feature>
<feature type="helix" evidence="2">
    <location>
        <begin position="220"/>
        <end position="225"/>
    </location>
</feature>
<feature type="helix" evidence="2">
    <location>
        <begin position="230"/>
        <end position="232"/>
    </location>
</feature>
<feature type="turn" evidence="2">
    <location>
        <begin position="233"/>
        <end position="235"/>
    </location>
</feature>
<feature type="helix" evidence="2">
    <location>
        <begin position="237"/>
        <end position="240"/>
    </location>
</feature>
<feature type="strand" evidence="2">
    <location>
        <begin position="244"/>
        <end position="246"/>
    </location>
</feature>
<feature type="helix" evidence="2">
    <location>
        <begin position="249"/>
        <end position="253"/>
    </location>
</feature>
<feature type="helix" evidence="2">
    <location>
        <begin position="259"/>
        <end position="272"/>
    </location>
</feature>
<feature type="helix" evidence="2">
    <location>
        <begin position="273"/>
        <end position="275"/>
    </location>
</feature>
<keyword id="KW-0002">3D-structure</keyword>
<keyword id="KW-1015">Disulfide bond</keyword>
<keyword id="KW-0574">Periplasm</keyword>
<keyword id="KW-0732">Signal</keyword>
<keyword id="KW-0813">Transport</keyword>
<accession>A5F5P5</accession>
<accession>C3M4A4</accession>
<gene>
    <name evidence="1" type="primary">btuF</name>
    <name type="ordered locus">VC0395_A1959</name>
    <name type="ordered locus">VC395_2496</name>
</gene>
<sequence length="276" mass="31071">MLVIRLIACTFLFITPSLLAKPFPAERIISLAPHATEIAYAAGLGDKLVAVSEYSDYPPQALELERVANHQTINIEKILTLKPDLIIAWPAGNPPRELAKLRQLGFTIYDSQTKTLDEIADNIEALSHYSANPEVGQKAAHDFRQRLQDLRTQYASNQPIRYFYQLSEKPIITLAQGHWPSEVFSLCGGVNIFADSEVPYPQVSIEQVLVKQPQVIFTSEHAIANGHMWRAWQAELSAVQNDQVWALNADWLNRPTPRTLDAVEQVCTYLKIAQKQ</sequence>
<evidence type="ECO:0000255" key="1">
    <source>
        <dbReference type="HAMAP-Rule" id="MF_01000"/>
    </source>
</evidence>
<evidence type="ECO:0007829" key="2">
    <source>
        <dbReference type="PDB" id="5YSC"/>
    </source>
</evidence>
<organism>
    <name type="scientific">Vibrio cholerae serotype O1 (strain ATCC 39541 / Classical Ogawa 395 / O395)</name>
    <dbReference type="NCBI Taxonomy" id="345073"/>
    <lineage>
        <taxon>Bacteria</taxon>
        <taxon>Pseudomonadati</taxon>
        <taxon>Pseudomonadota</taxon>
        <taxon>Gammaproteobacteria</taxon>
        <taxon>Vibrionales</taxon>
        <taxon>Vibrionaceae</taxon>
        <taxon>Vibrio</taxon>
    </lineage>
</organism>
<proteinExistence type="evidence at protein level"/>
<name>BTUF_VIBC3</name>